<keyword id="KW-0150">Chloroplast</keyword>
<keyword id="KW-0472">Membrane</keyword>
<keyword id="KW-0602">Photosynthesis</keyword>
<keyword id="KW-0604">Photosystem II</keyword>
<keyword id="KW-0934">Plastid</keyword>
<keyword id="KW-0674">Reaction center</keyword>
<keyword id="KW-0793">Thylakoid</keyword>
<keyword id="KW-0812">Transmembrane</keyword>
<keyword id="KW-1133">Transmembrane helix</keyword>
<sequence length="36" mass="3964">MEVNILGVIAVALFILIPTSFLLILYVKTSAENKDN</sequence>
<name>PSBM_BIGNA</name>
<geneLocation type="chloroplast"/>
<protein>
    <recommendedName>
        <fullName evidence="1">Photosystem II reaction center protein M</fullName>
        <shortName evidence="1">PSII-M</shortName>
    </recommendedName>
</protein>
<dbReference type="EMBL" id="DQ851108">
    <property type="protein sequence ID" value="ABG91411.1"/>
    <property type="molecule type" value="Genomic_DNA"/>
</dbReference>
<dbReference type="EMBL" id="DQ851108">
    <property type="protein sequence ID" value="ABG91414.1"/>
    <property type="molecule type" value="Genomic_DNA"/>
</dbReference>
<dbReference type="RefSeq" id="YP_778579.1">
    <property type="nucleotide sequence ID" value="NC_008408.1"/>
</dbReference>
<dbReference type="SMR" id="Q06J45"/>
<dbReference type="GeneID" id="4352996"/>
<dbReference type="GO" id="GO:0009535">
    <property type="term" value="C:chloroplast thylakoid membrane"/>
    <property type="evidence" value="ECO:0007669"/>
    <property type="project" value="UniProtKB-SubCell"/>
</dbReference>
<dbReference type="GO" id="GO:0009523">
    <property type="term" value="C:photosystem II"/>
    <property type="evidence" value="ECO:0007669"/>
    <property type="project" value="UniProtKB-KW"/>
</dbReference>
<dbReference type="GO" id="GO:0019684">
    <property type="term" value="P:photosynthesis, light reaction"/>
    <property type="evidence" value="ECO:0007669"/>
    <property type="project" value="InterPro"/>
</dbReference>
<dbReference type="HAMAP" id="MF_00438">
    <property type="entry name" value="PSII_PsbM"/>
    <property type="match status" value="1"/>
</dbReference>
<dbReference type="InterPro" id="IPR007826">
    <property type="entry name" value="PSII_PsbM"/>
</dbReference>
<dbReference type="InterPro" id="IPR037269">
    <property type="entry name" value="PSII_PsbM_sf"/>
</dbReference>
<dbReference type="NCBIfam" id="TIGR03038">
    <property type="entry name" value="PS_II_psbM"/>
    <property type="match status" value="1"/>
</dbReference>
<dbReference type="PANTHER" id="PTHR35774">
    <property type="entry name" value="PHOTOSYSTEM II REACTION CENTER PROTEIN M"/>
    <property type="match status" value="1"/>
</dbReference>
<dbReference type="PANTHER" id="PTHR35774:SF1">
    <property type="entry name" value="PHOTOSYSTEM II REACTION CENTER PROTEIN M"/>
    <property type="match status" value="1"/>
</dbReference>
<dbReference type="Pfam" id="PF05151">
    <property type="entry name" value="PsbM"/>
    <property type="match status" value="1"/>
</dbReference>
<dbReference type="SUPFAM" id="SSF161033">
    <property type="entry name" value="Photosystem II reaction center protein M, PsbM"/>
    <property type="match status" value="1"/>
</dbReference>
<gene>
    <name evidence="1" type="primary">psbM</name>
    <name type="synonym">psbM-A</name>
</gene>
<gene>
    <name evidence="1" type="primary">psbM</name>
    <name type="synonym">psbM-B</name>
</gene>
<organism>
    <name type="scientific">Bigelowiella natans</name>
    <name type="common">Pedinomonas minutissima</name>
    <name type="synonym">Chlorarachnion sp. (strain CCMP621)</name>
    <dbReference type="NCBI Taxonomy" id="227086"/>
    <lineage>
        <taxon>Eukaryota</taxon>
        <taxon>Sar</taxon>
        <taxon>Rhizaria</taxon>
        <taxon>Cercozoa</taxon>
        <taxon>Chlorarachniophyceae</taxon>
        <taxon>Bigelowiella</taxon>
    </lineage>
</organism>
<reference key="1">
    <citation type="journal article" date="2007" name="Mol. Biol. Evol.">
        <title>The complete chloroplast genome of the chlorarachniophyte Bigelowiella natans: evidence for independent origins of chlorarachniophyte and euglenid secondary endosymbionts.</title>
        <authorList>
            <person name="Rogers M.B."/>
            <person name="Gilson P.R."/>
            <person name="Su V."/>
            <person name="McFadden G.I."/>
            <person name="Keeling P.J."/>
        </authorList>
    </citation>
    <scope>NUCLEOTIDE SEQUENCE [LARGE SCALE GENOMIC DNA]</scope>
</reference>
<proteinExistence type="inferred from homology"/>
<evidence type="ECO:0000255" key="1">
    <source>
        <dbReference type="HAMAP-Rule" id="MF_00438"/>
    </source>
</evidence>
<evidence type="ECO:0000305" key="2"/>
<comment type="function">
    <text evidence="1">One of the components of the core complex of photosystem II (PSII). PSII is a light-driven water:plastoquinone oxidoreductase that uses light energy to abstract electrons from H(2)O, generating O(2) and a proton gradient subsequently used for ATP formation. It consists of a core antenna complex that captures photons, and an electron transfer chain that converts photonic excitation into a charge separation. This subunit is found at the monomer-monomer interface.</text>
</comment>
<comment type="subunit">
    <text evidence="2">PSII is composed of 1 copy each of membrane proteins PsbA, PsbB, PsbC, PsbD, PsbE, PsbF, PsbH, PsbI, PsbJ, PsbK, PsbL, PsbM, PsbT, PsbY, PsbZ, Psb30/Ycf12, at least 3 peripheral proteins of the oxygen-evolving complex and a large number of cofactors. It forms dimeric complexes.</text>
</comment>
<comment type="subcellular location">
    <subcellularLocation>
        <location evidence="1">Plastid</location>
        <location evidence="1">Chloroplast thylakoid membrane</location>
        <topology evidence="1">Single-pass membrane protein</topology>
    </subcellularLocation>
</comment>
<comment type="similarity">
    <text evidence="1">Belongs to the PsbM family.</text>
</comment>
<feature type="chain" id="PRO_0000295869" description="Photosystem II reaction center protein M">
    <location>
        <begin position="1"/>
        <end position="36"/>
    </location>
</feature>
<feature type="transmembrane region" description="Helical" evidence="1">
    <location>
        <begin position="5"/>
        <end position="25"/>
    </location>
</feature>
<accession>Q06J45</accession>